<feature type="chain" id="PRO_0000392810" description="Dermonecrotic toxin LvSicTox-alphaIC1bi">
    <location>
        <begin position="1" status="less than"/>
        <end position="272"/>
    </location>
</feature>
<feature type="active site" evidence="5">
    <location>
        <position position="5"/>
    </location>
</feature>
<feature type="active site" description="Nucleophile" evidence="5">
    <location>
        <position position="41"/>
    </location>
</feature>
<feature type="binding site" evidence="5">
    <location>
        <position position="25"/>
    </location>
    <ligand>
        <name>Mg(2+)</name>
        <dbReference type="ChEBI" id="CHEBI:18420"/>
    </ligand>
</feature>
<feature type="binding site" evidence="5">
    <location>
        <position position="27"/>
    </location>
    <ligand>
        <name>Mg(2+)</name>
        <dbReference type="ChEBI" id="CHEBI:18420"/>
    </ligand>
</feature>
<feature type="binding site" evidence="5">
    <location>
        <position position="84"/>
    </location>
    <ligand>
        <name>Mg(2+)</name>
        <dbReference type="ChEBI" id="CHEBI:18420"/>
    </ligand>
</feature>
<feature type="disulfide bond" evidence="3">
    <location>
        <begin position="45"/>
        <end position="51"/>
    </location>
</feature>
<feature type="disulfide bond" evidence="3">
    <location>
        <begin position="47"/>
        <end position="189"/>
    </location>
</feature>
<feature type="non-terminal residue">
    <location>
        <position position="1"/>
    </location>
</feature>
<keyword id="KW-0204">Cytolysis</keyword>
<keyword id="KW-1061">Dermonecrotic toxin</keyword>
<keyword id="KW-1015">Disulfide bond</keyword>
<keyword id="KW-0354">Hemolysis</keyword>
<keyword id="KW-0442">Lipid degradation</keyword>
<keyword id="KW-0443">Lipid metabolism</keyword>
<keyword id="KW-0456">Lyase</keyword>
<keyword id="KW-0460">Magnesium</keyword>
<keyword id="KW-0479">Metal-binding</keyword>
<keyword id="KW-0964">Secreted</keyword>
<keyword id="KW-0800">Toxin</keyword>
<protein>
    <recommendedName>
        <fullName evidence="6">Dermonecrotic toxin LvSicTox-alphaIC1bi</fullName>
        <ecNumber evidence="4">4.6.1.-</ecNumber>
    </recommendedName>
    <alternativeName>
        <fullName>Phospholipase D</fullName>
        <shortName>PLD</shortName>
    </alternativeName>
    <alternativeName>
        <fullName>Sphingomyelin phosphodiesterase D</fullName>
        <shortName>SMD</shortName>
        <shortName>SMase D</shortName>
        <shortName>Sphingomyelinase D</shortName>
    </alternativeName>
</protein>
<proteinExistence type="evidence at transcript level"/>
<organism>
    <name type="scientific">Loxosceles variegata</name>
    <name type="common">Recluse spider</name>
    <dbReference type="NCBI Taxonomy" id="571533"/>
    <lineage>
        <taxon>Eukaryota</taxon>
        <taxon>Metazoa</taxon>
        <taxon>Ecdysozoa</taxon>
        <taxon>Arthropoda</taxon>
        <taxon>Chelicerata</taxon>
        <taxon>Arachnida</taxon>
        <taxon>Araneae</taxon>
        <taxon>Araneomorphae</taxon>
        <taxon>Haplogynae</taxon>
        <taxon>Scytodoidea</taxon>
        <taxon>Sicariidae</taxon>
        <taxon>Loxosceles</taxon>
    </lineage>
</organism>
<sequence>WIMGHMVNNIKQIDEFVNLGSNAIETDVSFDKKANPEYTYHGTPCDCGRDCLRWEYFNDFVKALRTATTPGNSKYDKLFLVVFDLKTGSLYDYQASEAGTKLAKNLLQHYWNNGNNGGRAYIILSIPNLKHYKLITGFQQTLKDEGHAELLDKVGYDFSGNDDIGDVQKTYEKAGVTGHVWQSDGITNCLLRGFTRINAAVANRDSANGIINKVYYWTVDKRQTTRDTLDANVDGIMTNYPDITVEILNEDAYKTKFRIATYEDNPWETFKE</sequence>
<evidence type="ECO:0000250" key="1">
    <source>
        <dbReference type="UniProtKB" id="A0A0D4WTV1"/>
    </source>
</evidence>
<evidence type="ECO:0000250" key="2">
    <source>
        <dbReference type="UniProtKB" id="A0A0D4WV12"/>
    </source>
</evidence>
<evidence type="ECO:0000250" key="3">
    <source>
        <dbReference type="UniProtKB" id="P0CE80"/>
    </source>
</evidence>
<evidence type="ECO:0000250" key="4">
    <source>
        <dbReference type="UniProtKB" id="Q4ZFU2"/>
    </source>
</evidence>
<evidence type="ECO:0000250" key="5">
    <source>
        <dbReference type="UniProtKB" id="Q8I914"/>
    </source>
</evidence>
<evidence type="ECO:0000303" key="6">
    <source>
    </source>
</evidence>
<evidence type="ECO:0000305" key="7"/>
<evidence type="ECO:0000305" key="8">
    <source>
    </source>
</evidence>
<dbReference type="EC" id="4.6.1.-" evidence="4"/>
<dbReference type="EMBL" id="FJ171429">
    <property type="protein sequence ID" value="ACN48925.1"/>
    <property type="molecule type" value="mRNA"/>
</dbReference>
<dbReference type="SMR" id="C0JAZ4"/>
<dbReference type="GO" id="GO:0005576">
    <property type="term" value="C:extracellular region"/>
    <property type="evidence" value="ECO:0007669"/>
    <property type="project" value="UniProtKB-SubCell"/>
</dbReference>
<dbReference type="GO" id="GO:0016829">
    <property type="term" value="F:lyase activity"/>
    <property type="evidence" value="ECO:0007669"/>
    <property type="project" value="UniProtKB-KW"/>
</dbReference>
<dbReference type="GO" id="GO:0046872">
    <property type="term" value="F:metal ion binding"/>
    <property type="evidence" value="ECO:0007669"/>
    <property type="project" value="UniProtKB-KW"/>
</dbReference>
<dbReference type="GO" id="GO:0008081">
    <property type="term" value="F:phosphoric diester hydrolase activity"/>
    <property type="evidence" value="ECO:0007669"/>
    <property type="project" value="InterPro"/>
</dbReference>
<dbReference type="GO" id="GO:0090729">
    <property type="term" value="F:toxin activity"/>
    <property type="evidence" value="ECO:0007669"/>
    <property type="project" value="UniProtKB-KW"/>
</dbReference>
<dbReference type="GO" id="GO:0031640">
    <property type="term" value="P:killing of cells of another organism"/>
    <property type="evidence" value="ECO:0007669"/>
    <property type="project" value="UniProtKB-KW"/>
</dbReference>
<dbReference type="GO" id="GO:0016042">
    <property type="term" value="P:lipid catabolic process"/>
    <property type="evidence" value="ECO:0007669"/>
    <property type="project" value="UniProtKB-KW"/>
</dbReference>
<dbReference type="CDD" id="cd08576">
    <property type="entry name" value="GDPD_like_SMaseD_PLD"/>
    <property type="match status" value="1"/>
</dbReference>
<dbReference type="Gene3D" id="3.20.20.190">
    <property type="entry name" value="Phosphatidylinositol (PI) phosphodiesterase"/>
    <property type="match status" value="1"/>
</dbReference>
<dbReference type="InterPro" id="IPR017946">
    <property type="entry name" value="PLC-like_Pdiesterase_TIM-brl"/>
</dbReference>
<dbReference type="SUPFAM" id="SSF51695">
    <property type="entry name" value="PLC-like phosphodiesterases"/>
    <property type="match status" value="1"/>
</dbReference>
<name>A1OB1_LOXVA</name>
<reference key="1">
    <citation type="journal article" date="2009" name="Mol. Biol. Evol.">
        <title>Molecular evolution, functional variation, and proposed nomenclature of the gene family that includes sphingomyelinase D in sicariid spider venoms.</title>
        <authorList>
            <person name="Binford G.J."/>
            <person name="Bodner M.R."/>
            <person name="Cordes M.H."/>
            <person name="Baldwin K.L."/>
            <person name="Rynerson M.R."/>
            <person name="Burns S.N."/>
            <person name="Zobel-Thropp P.A."/>
        </authorList>
    </citation>
    <scope>NUCLEOTIDE SEQUENCE [MRNA]</scope>
    <scope>NOMENCLATURE</scope>
    <source>
        <tissue>Venom gland</tissue>
    </source>
</reference>
<comment type="function">
    <text evidence="1 3">Dermonecrotic toxins cleave the phosphodiester linkage between the phosphate and headgroup of certain phospholipids (sphingolipid and lysolipid substrates), forming an alcohol (often choline) and a cyclic phosphate (By similarity). This toxin acts on sphingomyelin (SM) (By similarity). It may also act on ceramide phosphoethanolamine (CPE), lysophosphatidylcholine (LPC) and lysophosphatidylethanolamine (LPE), but not on lysophosphatidylserine (LPS), and lysophosphatidylglycerol (LPG) (By similarity). It acts by transphosphatidylation, releasing exclusively cyclic phosphate products as second products (By similarity). Induces dermonecrosis, hemolysis, increased vascular permeability, edema, inflammatory response, and platelet aggregation (By similarity).</text>
</comment>
<comment type="catalytic activity">
    <reaction evidence="1">
        <text>an N-(acyl)-sphingosylphosphocholine = an N-(acyl)-sphingosyl-1,3-cyclic phosphate + choline</text>
        <dbReference type="Rhea" id="RHEA:60652"/>
        <dbReference type="ChEBI" id="CHEBI:15354"/>
        <dbReference type="ChEBI" id="CHEBI:64583"/>
        <dbReference type="ChEBI" id="CHEBI:143892"/>
    </reaction>
</comment>
<comment type="catalytic activity">
    <reaction evidence="1">
        <text>an N-(acyl)-sphingosylphosphoethanolamine = an N-(acyl)-sphingosyl-1,3-cyclic phosphate + ethanolamine</text>
        <dbReference type="Rhea" id="RHEA:60648"/>
        <dbReference type="ChEBI" id="CHEBI:57603"/>
        <dbReference type="ChEBI" id="CHEBI:143891"/>
        <dbReference type="ChEBI" id="CHEBI:143892"/>
    </reaction>
</comment>
<comment type="catalytic activity">
    <reaction evidence="1">
        <text>a 1-acyl-sn-glycero-3-phosphocholine = a 1-acyl-sn-glycero-2,3-cyclic phosphate + choline</text>
        <dbReference type="Rhea" id="RHEA:60700"/>
        <dbReference type="ChEBI" id="CHEBI:15354"/>
        <dbReference type="ChEBI" id="CHEBI:58168"/>
        <dbReference type="ChEBI" id="CHEBI:143947"/>
    </reaction>
</comment>
<comment type="catalytic activity">
    <reaction evidence="1">
        <text>a 1-acyl-sn-glycero-3-phosphoethanolamine = a 1-acyl-sn-glycero-2,3-cyclic phosphate + ethanolamine</text>
        <dbReference type="Rhea" id="RHEA:60704"/>
        <dbReference type="ChEBI" id="CHEBI:57603"/>
        <dbReference type="ChEBI" id="CHEBI:64381"/>
        <dbReference type="ChEBI" id="CHEBI:143947"/>
    </reaction>
</comment>
<comment type="cofactor">
    <cofactor evidence="5">
        <name>Mg(2+)</name>
        <dbReference type="ChEBI" id="CHEBI:18420"/>
    </cofactor>
    <text evidence="5">Binds 1 Mg(2+) ion per subunit.</text>
</comment>
<comment type="subcellular location">
    <subcellularLocation>
        <location evidence="8">Secreted</location>
    </subcellularLocation>
</comment>
<comment type="tissue specificity">
    <text evidence="8">Expressed by the venom gland.</text>
</comment>
<comment type="similarity">
    <text evidence="7">Belongs to the arthropod phospholipase D family. Class II subfamily.</text>
</comment>
<comment type="caution">
    <text evidence="1 2 4">The most common activity assay for dermonecrotic toxins detects enzymatic activity by monitoring choline release from substrate. Liberation of choline from sphingomyelin (SM) or lysophosphatidylcholine (LPC) is commonly assumed to result from substrate hydrolysis, giving either ceramide-1-phosphate (C1P) or lysophosphatidic acid (LPA), respectively, as a second product. However, two studies from Lajoie and colleagues (2013 and 2015) report the observation of exclusive formation of cyclic phosphate products as second products, resulting from intramolecular transphosphatidylation. Cyclic phosphates have vastly different biological properties from their monoester counterparts, and they may be relevant to the pathology of brown spider envenomation.</text>
</comment>
<accession>C0JAZ4</accession>